<accession>Q3V4Z4</accession>
<name>RK22_ACOCL</name>
<reference key="1">
    <citation type="journal article" date="2005" name="Mol. Biol. Evol.">
        <title>Analysis of Acorus calamus chloroplast genome and its phylogenetic implications.</title>
        <authorList>
            <person name="Goremykin V.V."/>
            <person name="Holland B."/>
            <person name="Hirsch-Ernst K.I."/>
            <person name="Hellwig F.H."/>
        </authorList>
    </citation>
    <scope>NUCLEOTIDE SEQUENCE [LARGE SCALE GENOMIC DNA]</scope>
</reference>
<gene>
    <name type="primary">rpl22</name>
</gene>
<comment type="function">
    <text evidence="1">This protein binds specifically to 23S rRNA.</text>
</comment>
<comment type="function">
    <text evidence="1">The globular domain of the protein is located near the polypeptide exit tunnel on the outside of the subunit, while an extended beta-hairpin is found that lines the wall of the exit tunnel in the center of the 70S ribosome.</text>
</comment>
<comment type="subunit">
    <text evidence="1">Part of the 50S ribosomal subunit.</text>
</comment>
<comment type="subcellular location">
    <subcellularLocation>
        <location>Plastid</location>
        <location>Chloroplast</location>
    </subcellularLocation>
</comment>
<comment type="similarity">
    <text evidence="2">Belongs to the universal ribosomal protein uL22 family.</text>
</comment>
<feature type="chain" id="PRO_0000243234" description="Large ribosomal subunit protein uL22c">
    <location>
        <begin position="1"/>
        <end position="127"/>
    </location>
</feature>
<evidence type="ECO:0000250" key="1"/>
<evidence type="ECO:0000305" key="2"/>
<protein>
    <recommendedName>
        <fullName evidence="2">Large ribosomal subunit protein uL22c</fullName>
    </recommendedName>
    <alternativeName>
        <fullName>50S ribosomal protein L22, chloroplastic</fullName>
    </alternativeName>
</protein>
<sequence length="127" mass="14334">MIKKNWITTGTEARALAQNISMSAYKARRVIDQIRGRSYEETIMILELMPYRASFPILKLVYSAAANAINNMGLSEADLFISKAEVNGGTFVKKLRPRARGRSYAIKRPTCHITIVLKDKDKSLLNE</sequence>
<geneLocation type="chloroplast"/>
<dbReference type="EMBL" id="AJ879453">
    <property type="protein sequence ID" value="CAI53834.1"/>
    <property type="molecule type" value="Genomic_DNA"/>
</dbReference>
<dbReference type="RefSeq" id="YP_319803.1">
    <property type="nucleotide sequence ID" value="NC_007407.1"/>
</dbReference>
<dbReference type="SMR" id="Q3V4Z4"/>
<dbReference type="GeneID" id="3677443"/>
<dbReference type="GO" id="GO:0009507">
    <property type="term" value="C:chloroplast"/>
    <property type="evidence" value="ECO:0007669"/>
    <property type="project" value="UniProtKB-SubCell"/>
</dbReference>
<dbReference type="GO" id="GO:0015934">
    <property type="term" value="C:large ribosomal subunit"/>
    <property type="evidence" value="ECO:0007669"/>
    <property type="project" value="InterPro"/>
</dbReference>
<dbReference type="GO" id="GO:0019843">
    <property type="term" value="F:rRNA binding"/>
    <property type="evidence" value="ECO:0007669"/>
    <property type="project" value="UniProtKB-UniRule"/>
</dbReference>
<dbReference type="GO" id="GO:0003735">
    <property type="term" value="F:structural constituent of ribosome"/>
    <property type="evidence" value="ECO:0007669"/>
    <property type="project" value="InterPro"/>
</dbReference>
<dbReference type="GO" id="GO:0006412">
    <property type="term" value="P:translation"/>
    <property type="evidence" value="ECO:0007669"/>
    <property type="project" value="UniProtKB-UniRule"/>
</dbReference>
<dbReference type="CDD" id="cd00336">
    <property type="entry name" value="Ribosomal_L22"/>
    <property type="match status" value="1"/>
</dbReference>
<dbReference type="FunFam" id="3.90.470.10:FF:000004">
    <property type="entry name" value="50S ribosomal protein L22, chloroplastic"/>
    <property type="match status" value="1"/>
</dbReference>
<dbReference type="Gene3D" id="3.90.470.10">
    <property type="entry name" value="Ribosomal protein L22/L17"/>
    <property type="match status" value="1"/>
</dbReference>
<dbReference type="HAMAP" id="MF_01331_B">
    <property type="entry name" value="Ribosomal_uL22_B"/>
    <property type="match status" value="1"/>
</dbReference>
<dbReference type="InterPro" id="IPR001063">
    <property type="entry name" value="Ribosomal_uL22"/>
</dbReference>
<dbReference type="InterPro" id="IPR005727">
    <property type="entry name" value="Ribosomal_uL22_bac/chlpt-type"/>
</dbReference>
<dbReference type="InterPro" id="IPR047867">
    <property type="entry name" value="Ribosomal_uL22_bac/org-type"/>
</dbReference>
<dbReference type="InterPro" id="IPR018260">
    <property type="entry name" value="Ribosomal_uL22_CS"/>
</dbReference>
<dbReference type="InterPro" id="IPR036394">
    <property type="entry name" value="Ribosomal_uL22_sf"/>
</dbReference>
<dbReference type="NCBIfam" id="TIGR01044">
    <property type="entry name" value="rplV_bact"/>
    <property type="match status" value="1"/>
</dbReference>
<dbReference type="PANTHER" id="PTHR13501">
    <property type="entry name" value="CHLOROPLAST 50S RIBOSOMAL PROTEIN L22-RELATED"/>
    <property type="match status" value="1"/>
</dbReference>
<dbReference type="PANTHER" id="PTHR13501:SF10">
    <property type="entry name" value="LARGE RIBOSOMAL SUBUNIT PROTEIN UL22M"/>
    <property type="match status" value="1"/>
</dbReference>
<dbReference type="Pfam" id="PF00237">
    <property type="entry name" value="Ribosomal_L22"/>
    <property type="match status" value="1"/>
</dbReference>
<dbReference type="SUPFAM" id="SSF54843">
    <property type="entry name" value="Ribosomal protein L22"/>
    <property type="match status" value="1"/>
</dbReference>
<dbReference type="PROSITE" id="PS00464">
    <property type="entry name" value="RIBOSOMAL_L22"/>
    <property type="match status" value="1"/>
</dbReference>
<keyword id="KW-0150">Chloroplast</keyword>
<keyword id="KW-0934">Plastid</keyword>
<keyword id="KW-0687">Ribonucleoprotein</keyword>
<keyword id="KW-0689">Ribosomal protein</keyword>
<keyword id="KW-0694">RNA-binding</keyword>
<keyword id="KW-0699">rRNA-binding</keyword>
<proteinExistence type="inferred from homology"/>
<organism>
    <name type="scientific">Acorus calamus</name>
    <name type="common">Sweet flag</name>
    <dbReference type="NCBI Taxonomy" id="4465"/>
    <lineage>
        <taxon>Eukaryota</taxon>
        <taxon>Viridiplantae</taxon>
        <taxon>Streptophyta</taxon>
        <taxon>Embryophyta</taxon>
        <taxon>Tracheophyta</taxon>
        <taxon>Spermatophyta</taxon>
        <taxon>Magnoliopsida</taxon>
        <taxon>Liliopsida</taxon>
        <taxon>Acoraceae</taxon>
        <taxon>Acorus</taxon>
    </lineage>
</organism>